<name>OSTN_HUMAN</name>
<accession>P61366</accession>
<accession>A1A4U3</accession>
<evidence type="ECO:0000250" key="1">
    <source>
        <dbReference type="UniProtKB" id="P61364"/>
    </source>
</evidence>
<evidence type="ECO:0000255" key="2"/>
<evidence type="ECO:0000269" key="3">
    <source>
    </source>
</evidence>
<evidence type="ECO:0000269" key="4">
    <source>
    </source>
</evidence>
<evidence type="ECO:0000269" key="5">
    <source>
    </source>
</evidence>
<evidence type="ECO:0000303" key="6">
    <source>
    </source>
</evidence>
<evidence type="ECO:0000303" key="7">
    <source>
    </source>
</evidence>
<evidence type="ECO:0000305" key="8"/>
<evidence type="ECO:0000312" key="9">
    <source>
        <dbReference type="HGNC" id="HGNC:29961"/>
    </source>
</evidence>
<sequence>MLDWRLASAHFILAVTLTLWSSGKVLSVDVTTTEAFDSGVIDVQSTPTVREEKSATDLTAKLLLLDELVSLENDVIETKKKRSFSGFGSPLDRLSAGSVDHKGKQRKVVDHPKRRFGIPMDRIGRNRLSNSRG</sequence>
<keyword id="KW-0027">Amidation</keyword>
<keyword id="KW-0165">Cleavage on pair of basic residues</keyword>
<keyword id="KW-0217">Developmental protein</keyword>
<keyword id="KW-0221">Differentiation</keyword>
<keyword id="KW-0372">Hormone</keyword>
<keyword id="KW-1267">Proteomics identification</keyword>
<keyword id="KW-1185">Reference proteome</keyword>
<keyword id="KW-0964">Secreted</keyword>
<keyword id="KW-0732">Signal</keyword>
<organism>
    <name type="scientific">Homo sapiens</name>
    <name type="common">Human</name>
    <dbReference type="NCBI Taxonomy" id="9606"/>
    <lineage>
        <taxon>Eukaryota</taxon>
        <taxon>Metazoa</taxon>
        <taxon>Chordata</taxon>
        <taxon>Craniata</taxon>
        <taxon>Vertebrata</taxon>
        <taxon>Euteleostomi</taxon>
        <taxon>Mammalia</taxon>
        <taxon>Eutheria</taxon>
        <taxon>Euarchontoglires</taxon>
        <taxon>Primates</taxon>
        <taxon>Haplorrhini</taxon>
        <taxon>Catarrhini</taxon>
        <taxon>Hominidae</taxon>
        <taxon>Homo</taxon>
    </lineage>
</organism>
<dbReference type="EMBL" id="AY398681">
    <property type="protein sequence ID" value="AAQ94966.1"/>
    <property type="molecule type" value="mRNA"/>
</dbReference>
<dbReference type="EMBL" id="AY573933">
    <property type="protein sequence ID" value="AAS87599.1"/>
    <property type="molecule type" value="mRNA"/>
</dbReference>
<dbReference type="EMBL" id="CH471052">
    <property type="protein sequence ID" value="EAW78095.1"/>
    <property type="molecule type" value="Genomic_DNA"/>
</dbReference>
<dbReference type="EMBL" id="BC128106">
    <property type="protein sequence ID" value="AAI28107.1"/>
    <property type="molecule type" value="mRNA"/>
</dbReference>
<dbReference type="EMBL" id="BC128107">
    <property type="protein sequence ID" value="AAI28108.1"/>
    <property type="molecule type" value="mRNA"/>
</dbReference>
<dbReference type="CCDS" id="CCDS3299.1"/>
<dbReference type="RefSeq" id="NP_937827.1">
    <property type="nucleotide sequence ID" value="NM_198184.2"/>
</dbReference>
<dbReference type="RefSeq" id="XP_016861792.1">
    <property type="nucleotide sequence ID" value="XM_017006303.3"/>
</dbReference>
<dbReference type="RefSeq" id="XP_054202408.1">
    <property type="nucleotide sequence ID" value="XM_054346433.1"/>
</dbReference>
<dbReference type="BioGRID" id="131332">
    <property type="interactions" value="9"/>
</dbReference>
<dbReference type="FunCoup" id="P61366">
    <property type="interactions" value="73"/>
</dbReference>
<dbReference type="IntAct" id="P61366">
    <property type="interactions" value="4"/>
</dbReference>
<dbReference type="STRING" id="9606.ENSP00000342356"/>
<dbReference type="GlyGen" id="P61366">
    <property type="glycosylation" value="1 site, 1 O-linked glycan (1 site)"/>
</dbReference>
<dbReference type="iPTMnet" id="P61366"/>
<dbReference type="PhosphoSitePlus" id="P61366"/>
<dbReference type="BioMuta" id="OSTN"/>
<dbReference type="DMDM" id="47117104"/>
<dbReference type="MassIVE" id="P61366"/>
<dbReference type="PaxDb" id="9606-ENSP00000342356"/>
<dbReference type="PeptideAtlas" id="P61366"/>
<dbReference type="Antibodypedia" id="56755">
    <property type="antibodies" value="105 antibodies from 13 providers"/>
</dbReference>
<dbReference type="DNASU" id="344901"/>
<dbReference type="Ensembl" id="ENST00000682035.1">
    <property type="protein sequence ID" value="ENSP00000508312.1"/>
    <property type="gene ID" value="ENSG00000188729.7"/>
</dbReference>
<dbReference type="GeneID" id="344901"/>
<dbReference type="KEGG" id="hsa:344901"/>
<dbReference type="MANE-Select" id="ENST00000682035.1">
    <property type="protein sequence ID" value="ENSP00000508312.1"/>
    <property type="RefSeq nucleotide sequence ID" value="NM_198184.2"/>
    <property type="RefSeq protein sequence ID" value="NP_937827.1"/>
</dbReference>
<dbReference type="UCSC" id="uc011bsn.2">
    <property type="organism name" value="human"/>
</dbReference>
<dbReference type="AGR" id="HGNC:29961"/>
<dbReference type="CTD" id="344901"/>
<dbReference type="DisGeNET" id="344901"/>
<dbReference type="GeneCards" id="OSTN"/>
<dbReference type="HGNC" id="HGNC:29961">
    <property type="gene designation" value="OSTN"/>
</dbReference>
<dbReference type="HPA" id="ENSG00000188729">
    <property type="expression patterns" value="Tissue enhanced (brain)"/>
</dbReference>
<dbReference type="MIM" id="610280">
    <property type="type" value="gene"/>
</dbReference>
<dbReference type="neXtProt" id="NX_P61366"/>
<dbReference type="OpenTargets" id="ENSG00000188729"/>
<dbReference type="PharmGKB" id="PA134912892"/>
<dbReference type="VEuPathDB" id="HostDB:ENSG00000188729"/>
<dbReference type="eggNOG" id="ENOG502S2R3">
    <property type="taxonomic scope" value="Eukaryota"/>
</dbReference>
<dbReference type="GeneTree" id="ENSGT00390000001750"/>
<dbReference type="HOGENOM" id="CLU_155967_0_0_1"/>
<dbReference type="InParanoid" id="P61366"/>
<dbReference type="OMA" id="PMDRIGG"/>
<dbReference type="OrthoDB" id="9900165at2759"/>
<dbReference type="PAN-GO" id="P61366">
    <property type="GO annotations" value="3 GO annotations based on evolutionary models"/>
</dbReference>
<dbReference type="PhylomeDB" id="P61366"/>
<dbReference type="TreeFam" id="TF333399"/>
<dbReference type="PathwayCommons" id="P61366"/>
<dbReference type="BioGRID-ORCS" id="344901">
    <property type="hits" value="7 hits in 1134 CRISPR screens"/>
</dbReference>
<dbReference type="ChiTaRS" id="OSTN">
    <property type="organism name" value="human"/>
</dbReference>
<dbReference type="GenomeRNAi" id="344901"/>
<dbReference type="Pharos" id="P61366">
    <property type="development level" value="Tbio"/>
</dbReference>
<dbReference type="PRO" id="PR:P61366"/>
<dbReference type="Proteomes" id="UP000005640">
    <property type="component" value="Chromosome 3"/>
</dbReference>
<dbReference type="RNAct" id="P61366">
    <property type="molecule type" value="protein"/>
</dbReference>
<dbReference type="Bgee" id="ENSG00000188729">
    <property type="expression patterns" value="Expressed in male germ line stem cell (sensu Vertebrata) in testis and 88 other cell types or tissues"/>
</dbReference>
<dbReference type="ExpressionAtlas" id="P61366">
    <property type="expression patterns" value="baseline and differential"/>
</dbReference>
<dbReference type="GO" id="GO:0005615">
    <property type="term" value="C:extracellular space"/>
    <property type="evidence" value="ECO:0000318"/>
    <property type="project" value="GO_Central"/>
</dbReference>
<dbReference type="GO" id="GO:0005179">
    <property type="term" value="F:hormone activity"/>
    <property type="evidence" value="ECO:0007669"/>
    <property type="project" value="UniProtKB-KW"/>
</dbReference>
<dbReference type="GO" id="GO:0005102">
    <property type="term" value="F:signaling receptor binding"/>
    <property type="evidence" value="ECO:0000318"/>
    <property type="project" value="GO_Central"/>
</dbReference>
<dbReference type="GO" id="GO:0030154">
    <property type="term" value="P:cell differentiation"/>
    <property type="evidence" value="ECO:0007669"/>
    <property type="project" value="UniProtKB-KW"/>
</dbReference>
<dbReference type="GO" id="GO:0007166">
    <property type="term" value="P:cell surface receptor signaling pathway"/>
    <property type="evidence" value="ECO:0007669"/>
    <property type="project" value="Ensembl"/>
</dbReference>
<dbReference type="GO" id="GO:0003416">
    <property type="term" value="P:endochondral bone growth"/>
    <property type="evidence" value="ECO:0007669"/>
    <property type="project" value="Ensembl"/>
</dbReference>
<dbReference type="GO" id="GO:0009755">
    <property type="term" value="P:hormone-mediated signaling pathway"/>
    <property type="evidence" value="ECO:0000318"/>
    <property type="project" value="GO_Central"/>
</dbReference>
<dbReference type="GO" id="GO:0046325">
    <property type="term" value="P:negative regulation of D-glucose import"/>
    <property type="evidence" value="ECO:0007669"/>
    <property type="project" value="Ensembl"/>
</dbReference>
<dbReference type="GO" id="GO:1903860">
    <property type="term" value="P:negative regulation of dendrite extension"/>
    <property type="evidence" value="ECO:0000315"/>
    <property type="project" value="UniProtKB"/>
</dbReference>
<dbReference type="GO" id="GO:0045668">
    <property type="term" value="P:negative regulation of osteoblast differentiation"/>
    <property type="evidence" value="ECO:0007669"/>
    <property type="project" value="Ensembl"/>
</dbReference>
<dbReference type="InterPro" id="IPR021088">
    <property type="entry name" value="Osteocrin"/>
</dbReference>
<dbReference type="PANTHER" id="PTHR35353">
    <property type="entry name" value="OSTEOCRIN"/>
    <property type="match status" value="1"/>
</dbReference>
<dbReference type="PANTHER" id="PTHR35353:SF1">
    <property type="entry name" value="OSTEOCRIN"/>
    <property type="match status" value="1"/>
</dbReference>
<dbReference type="Pfam" id="PF11037">
    <property type="entry name" value="Musclin"/>
    <property type="match status" value="1"/>
</dbReference>
<protein>
    <recommendedName>
        <fullName evidence="6">Osteocrin</fullName>
    </recommendedName>
    <alternativeName>
        <fullName evidence="7">Musclin</fullName>
    </alternativeName>
    <component>
        <recommendedName>
            <fullName evidence="1">Processed Osteocrin</fullName>
        </recommendedName>
    </component>
</protein>
<comment type="function">
    <text evidence="1 5">Hormone that acts as a regulator of dendritic growth in the developing cerebral cortex in response to sensory experience (PubMed:27830782). Induced in the brain following membrane depolarization and inhibits dendritic branching in neurons of the developing cortex (PubMed:27830782). Probably acts by binding to natriuretic peptide receptor NPR3/NPR-C, thereby preventing binding between NPR3/NPR-C and natriuretic peptides, leading to increase cGMP production (By similarity).</text>
</comment>
<comment type="subunit">
    <text evidence="1">Interacts with NPR3.</text>
</comment>
<comment type="subcellular location">
    <subcellularLocation>
        <location evidence="3">Secreted</location>
    </subcellularLocation>
</comment>
<comment type="tissue specificity">
    <text evidence="3 4 5">Enriched in neocortical regions of the developing cerebral cortex (PubMed:27830782). Not expressed in other compartments of the neocortical wall or in brain regions such as the hippocampus, striatum, mediodorsal nucleus of the thalamus and cerebellum (PubMed:27830782). Also expressed in bone (PubMed:14523025). In developing neonatal rib bone, present at high level in osteoblasts on bone-forming surfaces, in newly incorporated osteocytes and in some late hypertrophic chondrocytes (at protein level) (PubMed:15923362). In adult bone, localizes specifically to osteoblasts and young osteocytes at bone-forming sites (at protein level) (PubMed:15923362).</text>
</comment>
<comment type="developmental stage">
    <text evidence="5">Expression in the developing cerebral cortex increases during the course of fetal development and peaks around the late-mid fetal stage, concurrent with the onset of synaptogenesis in the cortical plate (PubMed:27830782).</text>
</comment>
<comment type="induction">
    <text evidence="5">Expression is induced in the developing cerebral cortex in response to neuronal activity in neurons: expression is driven by the presence of a enhancer sequence only present in primates that binds the MEF2 transcription factors (PubMed:27830782).</text>
</comment>
<comment type="similarity">
    <text evidence="8">Belongs to the Osteocrin family.</text>
</comment>
<comment type="caution">
    <text evidence="5">This protein-coding gene has been repurposed in primates, with the presence of a new enhancer sequence that drives expression in brain in response to sensory experience, leading to restrict dendritic growth in the developing cortex (PubMed:27830782).</text>
</comment>
<comment type="online information" name="Protein Spotlight">
    <link uri="https://www.proteinspotlight.org/back_issues/189/"/>
    <text>Something else - Issue 189 of March 2017</text>
</comment>
<proteinExistence type="evidence at protein level"/>
<gene>
    <name evidence="9" type="primary">OSTN</name>
</gene>
<reference key="1">
    <citation type="journal article" date="2003" name="J. Biol. Chem.">
        <title>Osteocrin, a novel bone-specific secreted protein that modulates the osteoblast phenotype.</title>
        <authorList>
            <person name="Thomas G."/>
            <person name="Moffatt P."/>
            <person name="Salois P."/>
            <person name="Gaumond M.-H."/>
            <person name="Gingras R."/>
            <person name="Godin E."/>
            <person name="Miao D."/>
            <person name="Goltzman D."/>
            <person name="Lanctot C."/>
        </authorList>
    </citation>
    <scope>NUCLEOTIDE SEQUENCE [MRNA]</scope>
    <scope>SUBCELLULAR LOCATION</scope>
    <scope>TISSUE SPECIFICITY</scope>
    <source>
        <tissue>Bone marrow</tissue>
    </source>
</reference>
<reference key="2">
    <citation type="journal article" date="2004" name="J. Biol. Chem.">
        <title>Musclin, a novel skeletal muscle-derived secretory factor.</title>
        <authorList>
            <person name="Nishizawa H."/>
            <person name="Matsuda M."/>
            <person name="Yamada Y."/>
            <person name="Kawai K."/>
            <person name="Suzuki E."/>
            <person name="Makishima M."/>
            <person name="Kitamura T."/>
            <person name="Shimomura I."/>
        </authorList>
    </citation>
    <scope>NUCLEOTIDE SEQUENCE [MRNA]</scope>
</reference>
<reference key="3">
    <citation type="submission" date="2005-09" db="EMBL/GenBank/DDBJ databases">
        <authorList>
            <person name="Mural R.J."/>
            <person name="Istrail S."/>
            <person name="Sutton G.G."/>
            <person name="Florea L."/>
            <person name="Halpern A.L."/>
            <person name="Mobarry C.M."/>
            <person name="Lippert R."/>
            <person name="Walenz B."/>
            <person name="Shatkay H."/>
            <person name="Dew I."/>
            <person name="Miller J.R."/>
            <person name="Flanigan M.J."/>
            <person name="Edwards N.J."/>
            <person name="Bolanos R."/>
            <person name="Fasulo D."/>
            <person name="Halldorsson B.V."/>
            <person name="Hannenhalli S."/>
            <person name="Turner R."/>
            <person name="Yooseph S."/>
            <person name="Lu F."/>
            <person name="Nusskern D.R."/>
            <person name="Shue B.C."/>
            <person name="Zheng X.H."/>
            <person name="Zhong F."/>
            <person name="Delcher A.L."/>
            <person name="Huson D.H."/>
            <person name="Kravitz S.A."/>
            <person name="Mouchard L."/>
            <person name="Reinert K."/>
            <person name="Remington K.A."/>
            <person name="Clark A.G."/>
            <person name="Waterman M.S."/>
            <person name="Eichler E.E."/>
            <person name="Adams M.D."/>
            <person name="Hunkapiller M.W."/>
            <person name="Myers E.W."/>
            <person name="Venter J.C."/>
        </authorList>
    </citation>
    <scope>NUCLEOTIDE SEQUENCE [LARGE SCALE GENOMIC DNA]</scope>
</reference>
<reference key="4">
    <citation type="journal article" date="2004" name="Genome Res.">
        <title>The status, quality, and expansion of the NIH full-length cDNA project: the Mammalian Gene Collection (MGC).</title>
        <authorList>
            <consortium name="The MGC Project Team"/>
        </authorList>
    </citation>
    <scope>NUCLEOTIDE SEQUENCE [LARGE SCALE MRNA]</scope>
</reference>
<reference key="5">
    <citation type="journal article" date="2005" name="J. Histochem. Cytochem.">
        <title>Characterization of osteocrin expression in human bone.</title>
        <authorList>
            <person name="Bord S."/>
            <person name="Ireland D.C."/>
            <person name="Moffatt P."/>
            <person name="Thomas G.P."/>
            <person name="Compston J.E."/>
        </authorList>
    </citation>
    <scope>TISSUE SPECIFICITY</scope>
</reference>
<reference key="6">
    <citation type="journal article" date="2016" name="Nature">
        <title>Evolution of Osteocrin as an activity-regulated factor in the primate brain.</title>
        <authorList>
            <person name="Ataman B."/>
            <person name="Boulting G.L."/>
            <person name="Harmin D.A."/>
            <person name="Yang M.G."/>
            <person name="Baker-Salisbury M."/>
            <person name="Yap E.L."/>
            <person name="Malik A.N."/>
            <person name="Mei K."/>
            <person name="Rubin A.A."/>
            <person name="Spiegel I."/>
            <person name="Durresi E."/>
            <person name="Sharma N."/>
            <person name="Hu L.S."/>
            <person name="Pletikos M."/>
            <person name="Griffith E.C."/>
            <person name="Partlow J.N."/>
            <person name="Stevens C.R."/>
            <person name="Adli M."/>
            <person name="Chahrour M."/>
            <person name="Sestan N."/>
            <person name="Walsh C.A."/>
            <person name="Berezovskii V.K."/>
            <person name="Livingstone M.S."/>
            <person name="Greenberg M.E."/>
        </authorList>
    </citation>
    <scope>FUNCTION</scope>
    <scope>TISSUE SPECIFICITY</scope>
    <scope>DEVELOPMENTAL STAGE</scope>
    <scope>INDUCTION</scope>
</reference>
<feature type="signal peptide" evidence="2">
    <location>
        <begin position="1"/>
        <end position="27"/>
    </location>
</feature>
<feature type="chain" id="PRO_0000439029" description="Osteocrin" evidence="1">
    <location>
        <begin position="28"/>
        <end position="133"/>
    </location>
</feature>
<feature type="peptide" id="PRO_0000021966" description="Processed Osteocrin" evidence="1">
    <location>
        <begin position="83"/>
        <end position="132"/>
    </location>
</feature>
<feature type="modified residue" description="Arginine amide" evidence="2">
    <location>
        <position position="132"/>
    </location>
</feature>